<accession>Q05966</accession>
<proteinExistence type="evidence at transcript level"/>
<evidence type="ECO:0000255" key="1">
    <source>
        <dbReference type="PROSITE-ProRule" id="PRU00176"/>
    </source>
</evidence>
<evidence type="ECO:0000256" key="2">
    <source>
        <dbReference type="SAM" id="MobiDB-lite"/>
    </source>
</evidence>
<organism>
    <name type="scientific">Brassica napus</name>
    <name type="common">Rape</name>
    <dbReference type="NCBI Taxonomy" id="3708"/>
    <lineage>
        <taxon>Eukaryota</taxon>
        <taxon>Viridiplantae</taxon>
        <taxon>Streptophyta</taxon>
        <taxon>Embryophyta</taxon>
        <taxon>Tracheophyta</taxon>
        <taxon>Spermatophyta</taxon>
        <taxon>Magnoliopsida</taxon>
        <taxon>eudicotyledons</taxon>
        <taxon>Gunneridae</taxon>
        <taxon>Pentapetalae</taxon>
        <taxon>rosids</taxon>
        <taxon>malvids</taxon>
        <taxon>Brassicales</taxon>
        <taxon>Brassicaceae</taxon>
        <taxon>Brassiceae</taxon>
        <taxon>Brassica</taxon>
    </lineage>
</organism>
<dbReference type="EMBL" id="Z14143">
    <property type="protein sequence ID" value="CAA78513.1"/>
    <property type="molecule type" value="Genomic_DNA"/>
</dbReference>
<dbReference type="PIR" id="S38331">
    <property type="entry name" value="S38331"/>
</dbReference>
<dbReference type="RefSeq" id="XP_013735705.1">
    <property type="nucleotide sequence ID" value="XM_013880251.1"/>
</dbReference>
<dbReference type="RefSeq" id="XP_013735737.1">
    <property type="nucleotide sequence ID" value="XM_013880283.1"/>
</dbReference>
<dbReference type="SMR" id="Q05966"/>
<dbReference type="GeneID" id="106438956"/>
<dbReference type="KEGG" id="bna:106438956"/>
<dbReference type="OrthoDB" id="439808at2759"/>
<dbReference type="GO" id="GO:0003723">
    <property type="term" value="F:RNA binding"/>
    <property type="evidence" value="ECO:0007669"/>
    <property type="project" value="UniProtKB-KW"/>
</dbReference>
<dbReference type="GO" id="GO:0016070">
    <property type="term" value="P:RNA metabolic process"/>
    <property type="evidence" value="ECO:0007669"/>
    <property type="project" value="UniProtKB-ARBA"/>
</dbReference>
<dbReference type="CDD" id="cd21608">
    <property type="entry name" value="RRM2_NsCP33_like"/>
    <property type="match status" value="1"/>
</dbReference>
<dbReference type="Gene3D" id="3.30.70.330">
    <property type="match status" value="1"/>
</dbReference>
<dbReference type="InterPro" id="IPR012677">
    <property type="entry name" value="Nucleotide-bd_a/b_plait_sf"/>
</dbReference>
<dbReference type="InterPro" id="IPR035979">
    <property type="entry name" value="RBD_domain_sf"/>
</dbReference>
<dbReference type="InterPro" id="IPR048289">
    <property type="entry name" value="RRM2_NsCP33-like"/>
</dbReference>
<dbReference type="InterPro" id="IPR000504">
    <property type="entry name" value="RRM_dom"/>
</dbReference>
<dbReference type="InterPro" id="IPR052462">
    <property type="entry name" value="SLIRP/GR-RBP-like"/>
</dbReference>
<dbReference type="PANTHER" id="PTHR48027">
    <property type="entry name" value="HETEROGENEOUS NUCLEAR RIBONUCLEOPROTEIN 87F-RELATED"/>
    <property type="match status" value="1"/>
</dbReference>
<dbReference type="Pfam" id="PF00076">
    <property type="entry name" value="RRM_1"/>
    <property type="match status" value="1"/>
</dbReference>
<dbReference type="SMART" id="SM00360">
    <property type="entry name" value="RRM"/>
    <property type="match status" value="1"/>
</dbReference>
<dbReference type="SUPFAM" id="SSF54928">
    <property type="entry name" value="RNA-binding domain, RBD"/>
    <property type="match status" value="1"/>
</dbReference>
<dbReference type="PROSITE" id="PS50102">
    <property type="entry name" value="RRM"/>
    <property type="match status" value="1"/>
</dbReference>
<gene>
    <name type="primary">GRP10</name>
</gene>
<feature type="chain" id="PRO_0000081601" description="Glycine-rich RNA-binding protein 10">
    <location>
        <begin position="1"/>
        <end position="169"/>
    </location>
</feature>
<feature type="domain" description="RRM" evidence="1">
    <location>
        <begin position="6"/>
        <end position="84"/>
    </location>
</feature>
<feature type="region of interest" description="Disordered" evidence="2">
    <location>
        <begin position="80"/>
        <end position="101"/>
    </location>
</feature>
<feature type="region of interest" description="Disordered" evidence="2">
    <location>
        <begin position="121"/>
        <end position="169"/>
    </location>
</feature>
<feature type="compositionally biased region" description="Gly residues" evidence="2">
    <location>
        <begin position="85"/>
        <end position="101"/>
    </location>
</feature>
<name>GRP10_BRANA</name>
<protein>
    <recommendedName>
        <fullName>Glycine-rich RNA-binding protein 10</fullName>
    </recommendedName>
</protein>
<comment type="function">
    <text>Possibly has a role in RNA transcription or processing during stress.</text>
</comment>
<comment type="tissue specificity">
    <text>Expressed only in roots and stems.</text>
</comment>
<keyword id="KW-0694">RNA-binding</keyword>
<sequence length="169" mass="16304">MSEVEYRCFVGGLAWATGDAELERTFSQFGEVIDSKIINDRETGRSRGFGFVTFKDEKSMKDAIDEMNGKELDGRTITVNEAQSRGGGGGGGRGGGGYGGRGGGGYGGGGGGYGDRRGGGGYGSGGGGRGGGGYGSGGGGYGGGGGRRDGGGYGGGDGGYGGGSGGGGW</sequence>
<reference key="1">
    <citation type="journal article" date="1993" name="Biochim. Biophys. Acta">
        <title>Sequence and expression of a gene encoding a protein with RNA-binding and glycine-rich domains in Brassica napus.</title>
        <authorList>
            <person name="Bergeron D."/>
            <person name="Beauseigle D."/>
            <person name="Bellemare G."/>
        </authorList>
    </citation>
    <scope>NUCLEOTIDE SEQUENCE [GENOMIC DNA]</scope>
</reference>